<reference key="1">
    <citation type="journal article" date="2006" name="Plant Physiol.">
        <title>FRIGIDA LIKE 2 is a functional allele in Landsberg erecta and compensates for a nonsense allele of FRIGIDA LIKE 1.</title>
        <authorList>
            <person name="Schlappi M.R."/>
        </authorList>
    </citation>
    <scope>NUCLEOTIDE SEQUENCE [GENOMIC DNA]</scope>
    <scope>FUNCTION</scope>
    <source>
        <strain>cv. Landsberg erecta</strain>
    </source>
</reference>
<reference key="2">
    <citation type="journal article" date="2010" name="Plant Mol. Biol.">
        <title>FRIGIDA and related proteins have a conserved central domain and family specific N- and C- terminal regions that are functionally important.</title>
        <authorList>
            <person name="Risk J.M."/>
            <person name="Laurie R.E."/>
            <person name="Macknight R.C."/>
            <person name="Day C.L."/>
        </authorList>
    </citation>
    <scope>GENE FAMILY</scope>
    <scope>NOMENCLATURE</scope>
</reference>
<comment type="function">
    <text evidence="2">Truncated inactive FRIGIDA-like 1 protein.</text>
</comment>
<comment type="miscellaneous">
    <text evidence="4">In cv. Columbia and cv. Landsberg erecta, either FRL1 or FRL2, but not both, is functional and required for FRI-mediated up-regulation of FLC (PubMed:17056759).</text>
</comment>
<comment type="similarity">
    <text evidence="3">Belongs to the Frigida family.</text>
</comment>
<comment type="caution">
    <text evidence="3">In cv. Columbia, FRL1 (AC Q9FFF1) is full-length and functional.</text>
</comment>
<proteinExistence type="inferred from homology"/>
<protein>
    <recommendedName>
        <fullName>Truncated FRIGIDA-like protein 1</fullName>
        <shortName>AtFRIL1</shortName>
    </recommendedName>
    <alternativeName>
        <fullName>Protein SUPPRESSOR OF FRI 8</fullName>
    </alternativeName>
</protein>
<keyword id="KW-0175">Coiled coil</keyword>
<keyword id="KW-0217">Developmental protein</keyword>
<keyword id="KW-0221">Differentiation</keyword>
<keyword id="KW-0287">Flowering</keyword>
<name>FRL1T_ARATH</name>
<dbReference type="SMR" id="P0DKC9"/>
<dbReference type="ExpressionAtlas" id="P0DKC9">
    <property type="expression patterns" value="baseline and differential"/>
</dbReference>
<dbReference type="GO" id="GO:0030154">
    <property type="term" value="P:cell differentiation"/>
    <property type="evidence" value="ECO:0007669"/>
    <property type="project" value="UniProtKB-KW"/>
</dbReference>
<dbReference type="GO" id="GO:0009908">
    <property type="term" value="P:flower development"/>
    <property type="evidence" value="ECO:0007669"/>
    <property type="project" value="UniProtKB-KW"/>
</dbReference>
<dbReference type="InterPro" id="IPR012474">
    <property type="entry name" value="Frigida"/>
</dbReference>
<dbReference type="PANTHER" id="PTHR31791:SF74">
    <property type="entry name" value="FRIGIDA-LIKE PROTEIN 1"/>
    <property type="match status" value="1"/>
</dbReference>
<dbReference type="PANTHER" id="PTHR31791">
    <property type="entry name" value="FRIGIDA-LIKE PROTEIN 3-RELATED"/>
    <property type="match status" value="1"/>
</dbReference>
<dbReference type="Pfam" id="PF07899">
    <property type="entry name" value="Frigida"/>
    <property type="match status" value="1"/>
</dbReference>
<accession>P0DKC9</accession>
<feature type="chain" id="PRO_0000423739" description="Truncated FRIGIDA-like protein 1">
    <location>
        <begin position="1"/>
        <end position="278"/>
    </location>
</feature>
<feature type="coiled-coil region" evidence="1">
    <location>
        <begin position="1"/>
        <end position="36"/>
    </location>
</feature>
<organism>
    <name type="scientific">Arabidopsis thaliana</name>
    <name type="common">Mouse-ear cress</name>
    <dbReference type="NCBI Taxonomy" id="3702"/>
    <lineage>
        <taxon>Eukaryota</taxon>
        <taxon>Viridiplantae</taxon>
        <taxon>Streptophyta</taxon>
        <taxon>Embryophyta</taxon>
        <taxon>Tracheophyta</taxon>
        <taxon>Spermatophyta</taxon>
        <taxon>Magnoliopsida</taxon>
        <taxon>eudicotyledons</taxon>
        <taxon>Gunneridae</taxon>
        <taxon>Pentapetalae</taxon>
        <taxon>rosids</taxon>
        <taxon>malvids</taxon>
        <taxon>Brassicales</taxon>
        <taxon>Brassicaceae</taxon>
        <taxon>Camelineae</taxon>
        <taxon>Arabidopsis</taxon>
    </lineage>
</organism>
<evidence type="ECO:0000255" key="1"/>
<evidence type="ECO:0000269" key="2">
    <source>
    </source>
</evidence>
<evidence type="ECO:0000305" key="3"/>
<evidence type="ECO:0000305" key="4">
    <source>
    </source>
</evidence>
<gene>
    <name type="primary">FRL1</name>
    <name type="synonym">SUF8</name>
</gene>
<sequence>MTASETIATAINQIDEKKEKLKKAFDDLQAHRSLLSPSFSLSWSEIDSHFSSLQSSLASRFRLLHSTSPLEHDSYRIDASDAGKSSSSEEVSEQPVVEPELRALCEKIDGIGLIKYLIRIWDDETPLNQEVSAAIRYSPDPASMVLDAIEGSNYTPSSSGRSFDVRRVFVLLMEVLIEINANITVDTRNRAKKLAYHWKSKVGVKPFEALVFLHLVAAFELGSEFDTEELSDYVFMIAKYKQATLVCNKIGVDRKRVGKLIKTLLDSGKPILAVKFMY</sequence>